<feature type="chain" id="PRO_1000043245" description="Pantothenate kinase">
    <location>
        <begin position="1"/>
        <end position="318"/>
    </location>
</feature>
<feature type="binding site" evidence="1">
    <location>
        <begin position="96"/>
        <end position="103"/>
    </location>
    <ligand>
        <name>ATP</name>
        <dbReference type="ChEBI" id="CHEBI:30616"/>
    </ligand>
</feature>
<comment type="catalytic activity">
    <reaction evidence="1">
        <text>(R)-pantothenate + ATP = (R)-4'-phosphopantothenate + ADP + H(+)</text>
        <dbReference type="Rhea" id="RHEA:16373"/>
        <dbReference type="ChEBI" id="CHEBI:10986"/>
        <dbReference type="ChEBI" id="CHEBI:15378"/>
        <dbReference type="ChEBI" id="CHEBI:29032"/>
        <dbReference type="ChEBI" id="CHEBI:30616"/>
        <dbReference type="ChEBI" id="CHEBI:456216"/>
        <dbReference type="EC" id="2.7.1.33"/>
    </reaction>
</comment>
<comment type="pathway">
    <text evidence="1">Cofactor biosynthesis; coenzyme A biosynthesis; CoA from (R)-pantothenate: step 1/5.</text>
</comment>
<comment type="subcellular location">
    <subcellularLocation>
        <location evidence="1">Cytoplasm</location>
    </subcellularLocation>
</comment>
<comment type="similarity">
    <text evidence="1">Belongs to the prokaryotic pantothenate kinase family.</text>
</comment>
<proteinExistence type="inferred from homology"/>
<organism>
    <name type="scientific">Rhodopseudomonas palustris (strain BisB5)</name>
    <dbReference type="NCBI Taxonomy" id="316057"/>
    <lineage>
        <taxon>Bacteria</taxon>
        <taxon>Pseudomonadati</taxon>
        <taxon>Pseudomonadota</taxon>
        <taxon>Alphaproteobacteria</taxon>
        <taxon>Hyphomicrobiales</taxon>
        <taxon>Nitrobacteraceae</taxon>
        <taxon>Rhodopseudomonas</taxon>
    </lineage>
</organism>
<reference key="1">
    <citation type="submission" date="2006-03" db="EMBL/GenBank/DDBJ databases">
        <title>Complete sequence of Rhodopseudomonas palustris BisB5.</title>
        <authorList>
            <consortium name="US DOE Joint Genome Institute"/>
            <person name="Copeland A."/>
            <person name="Lucas S."/>
            <person name="Lapidus A."/>
            <person name="Barry K."/>
            <person name="Detter J.C."/>
            <person name="Glavina del Rio T."/>
            <person name="Hammon N."/>
            <person name="Israni S."/>
            <person name="Dalin E."/>
            <person name="Tice H."/>
            <person name="Pitluck S."/>
            <person name="Chain P."/>
            <person name="Malfatti S."/>
            <person name="Shin M."/>
            <person name="Vergez L."/>
            <person name="Schmutz J."/>
            <person name="Larimer F."/>
            <person name="Land M."/>
            <person name="Hauser L."/>
            <person name="Pelletier D.A."/>
            <person name="Kyrpides N."/>
            <person name="Lykidis A."/>
            <person name="Oda Y."/>
            <person name="Harwood C.S."/>
            <person name="Richardson P."/>
        </authorList>
    </citation>
    <scope>NUCLEOTIDE SEQUENCE [LARGE SCALE GENOMIC DNA]</scope>
    <source>
        <strain>BisB5</strain>
    </source>
</reference>
<accession>Q13E42</accession>
<keyword id="KW-0067">ATP-binding</keyword>
<keyword id="KW-0173">Coenzyme A biosynthesis</keyword>
<keyword id="KW-0963">Cytoplasm</keyword>
<keyword id="KW-0418">Kinase</keyword>
<keyword id="KW-0547">Nucleotide-binding</keyword>
<keyword id="KW-0808">Transferase</keyword>
<dbReference type="EC" id="2.7.1.33" evidence="1"/>
<dbReference type="EMBL" id="CP000283">
    <property type="protein sequence ID" value="ABE37647.1"/>
    <property type="molecule type" value="Genomic_DNA"/>
</dbReference>
<dbReference type="SMR" id="Q13E42"/>
<dbReference type="STRING" id="316057.RPD_0409"/>
<dbReference type="KEGG" id="rpd:RPD_0409"/>
<dbReference type="eggNOG" id="COG1072">
    <property type="taxonomic scope" value="Bacteria"/>
</dbReference>
<dbReference type="HOGENOM" id="CLU_053818_1_1_5"/>
<dbReference type="BioCyc" id="RPAL316057:RPD_RS02105-MONOMER"/>
<dbReference type="UniPathway" id="UPA00241">
    <property type="reaction ID" value="UER00352"/>
</dbReference>
<dbReference type="Proteomes" id="UP000001818">
    <property type="component" value="Chromosome"/>
</dbReference>
<dbReference type="GO" id="GO:0005737">
    <property type="term" value="C:cytoplasm"/>
    <property type="evidence" value="ECO:0007669"/>
    <property type="project" value="UniProtKB-SubCell"/>
</dbReference>
<dbReference type="GO" id="GO:0005524">
    <property type="term" value="F:ATP binding"/>
    <property type="evidence" value="ECO:0007669"/>
    <property type="project" value="UniProtKB-UniRule"/>
</dbReference>
<dbReference type="GO" id="GO:0004594">
    <property type="term" value="F:pantothenate kinase activity"/>
    <property type="evidence" value="ECO:0007669"/>
    <property type="project" value="UniProtKB-UniRule"/>
</dbReference>
<dbReference type="GO" id="GO:0015937">
    <property type="term" value="P:coenzyme A biosynthetic process"/>
    <property type="evidence" value="ECO:0007669"/>
    <property type="project" value="UniProtKB-UniRule"/>
</dbReference>
<dbReference type="CDD" id="cd02025">
    <property type="entry name" value="PanK"/>
    <property type="match status" value="1"/>
</dbReference>
<dbReference type="Gene3D" id="3.40.50.300">
    <property type="entry name" value="P-loop containing nucleotide triphosphate hydrolases"/>
    <property type="match status" value="1"/>
</dbReference>
<dbReference type="HAMAP" id="MF_00215">
    <property type="entry name" value="Pantothen_kinase_1"/>
    <property type="match status" value="1"/>
</dbReference>
<dbReference type="InterPro" id="IPR027417">
    <property type="entry name" value="P-loop_NTPase"/>
</dbReference>
<dbReference type="InterPro" id="IPR004566">
    <property type="entry name" value="PanK"/>
</dbReference>
<dbReference type="InterPro" id="IPR006083">
    <property type="entry name" value="PRK/URK"/>
</dbReference>
<dbReference type="NCBIfam" id="TIGR00554">
    <property type="entry name" value="panK_bact"/>
    <property type="match status" value="1"/>
</dbReference>
<dbReference type="PANTHER" id="PTHR10285">
    <property type="entry name" value="URIDINE KINASE"/>
    <property type="match status" value="1"/>
</dbReference>
<dbReference type="Pfam" id="PF00485">
    <property type="entry name" value="PRK"/>
    <property type="match status" value="1"/>
</dbReference>
<dbReference type="PIRSF" id="PIRSF000545">
    <property type="entry name" value="Pantothenate_kin"/>
    <property type="match status" value="1"/>
</dbReference>
<dbReference type="SUPFAM" id="SSF52540">
    <property type="entry name" value="P-loop containing nucleoside triphosphate hydrolases"/>
    <property type="match status" value="1"/>
</dbReference>
<gene>
    <name evidence="1" type="primary">coaA</name>
    <name type="ordered locus">RPD_0409</name>
</gene>
<protein>
    <recommendedName>
        <fullName evidence="1">Pantothenate kinase</fullName>
        <ecNumber evidence="1">2.7.1.33</ecNumber>
    </recommendedName>
    <alternativeName>
        <fullName evidence="1">Pantothenic acid kinase</fullName>
    </alternativeName>
</protein>
<name>COAA_RHOPS</name>
<evidence type="ECO:0000255" key="1">
    <source>
        <dbReference type="HAMAP-Rule" id="MF_00215"/>
    </source>
</evidence>
<sequence>MDARSELHHYNPYRVFSRSEWANLRQDTPMTLDLAEVSTLRSLHDRLDITEVEEIYLPMSRLLSIHVGAMQQLYYAQRRFLGVVERKMPYIIGVAGSVAVGKSTTARVLQALLARWSPRPKVDLITTDGFLHPNALLERAGLMQKKGFPESYDLPALLAFLSDIKSGRRKVRAPIYSHLTYDIVPNKFAVVDRPDILIVEGVNVLQTGRLPRDGKAVPVVSDFFDFSVYIDADEPVLRDWYIRRFLALRDTAFHDPRSYFHRYAPLSDEEATATAIAIWERTNLANLEDNILPTRPRATLILKKGADHVVDSVALRRL</sequence>